<gene>
    <name evidence="1" type="primary">coaD</name>
    <name type="synonym">kdtB</name>
</gene>
<dbReference type="EC" id="2.7.7.3" evidence="1"/>
<dbReference type="EMBL" id="AF146532">
    <property type="protein sequence ID" value="AAD37773.1"/>
    <property type="molecule type" value="Genomic_DNA"/>
</dbReference>
<dbReference type="RefSeq" id="WP_002922501.1">
    <property type="nucleotide sequence ID" value="NZ_WYAM01000023.1"/>
</dbReference>
<dbReference type="PDB" id="8I8I">
    <property type="method" value="X-ray"/>
    <property type="resolution" value="2.59 A"/>
    <property type="chains" value="A/B/C=1-159"/>
</dbReference>
<dbReference type="PDBsum" id="8I8I"/>
<dbReference type="SMR" id="Q9XC89"/>
<dbReference type="OMA" id="MALMNRK"/>
<dbReference type="UniPathway" id="UPA00241">
    <property type="reaction ID" value="UER00355"/>
</dbReference>
<dbReference type="GO" id="GO:0005737">
    <property type="term" value="C:cytoplasm"/>
    <property type="evidence" value="ECO:0007669"/>
    <property type="project" value="UniProtKB-SubCell"/>
</dbReference>
<dbReference type="GO" id="GO:0005524">
    <property type="term" value="F:ATP binding"/>
    <property type="evidence" value="ECO:0007669"/>
    <property type="project" value="UniProtKB-KW"/>
</dbReference>
<dbReference type="GO" id="GO:0004595">
    <property type="term" value="F:pantetheine-phosphate adenylyltransferase activity"/>
    <property type="evidence" value="ECO:0007669"/>
    <property type="project" value="UniProtKB-UniRule"/>
</dbReference>
<dbReference type="GO" id="GO:0015937">
    <property type="term" value="P:coenzyme A biosynthetic process"/>
    <property type="evidence" value="ECO:0007669"/>
    <property type="project" value="UniProtKB-UniRule"/>
</dbReference>
<dbReference type="CDD" id="cd02163">
    <property type="entry name" value="PPAT"/>
    <property type="match status" value="1"/>
</dbReference>
<dbReference type="FunFam" id="3.40.50.620:FF:000012">
    <property type="entry name" value="Phosphopantetheine adenylyltransferase"/>
    <property type="match status" value="1"/>
</dbReference>
<dbReference type="Gene3D" id="3.40.50.620">
    <property type="entry name" value="HUPs"/>
    <property type="match status" value="1"/>
</dbReference>
<dbReference type="HAMAP" id="MF_00151">
    <property type="entry name" value="PPAT_bact"/>
    <property type="match status" value="1"/>
</dbReference>
<dbReference type="InterPro" id="IPR004821">
    <property type="entry name" value="Cyt_trans-like"/>
</dbReference>
<dbReference type="InterPro" id="IPR001980">
    <property type="entry name" value="PPAT"/>
</dbReference>
<dbReference type="InterPro" id="IPR014729">
    <property type="entry name" value="Rossmann-like_a/b/a_fold"/>
</dbReference>
<dbReference type="NCBIfam" id="TIGR01510">
    <property type="entry name" value="coaD_prev_kdtB"/>
    <property type="match status" value="1"/>
</dbReference>
<dbReference type="NCBIfam" id="TIGR00125">
    <property type="entry name" value="cyt_tran_rel"/>
    <property type="match status" value="1"/>
</dbReference>
<dbReference type="PANTHER" id="PTHR21342">
    <property type="entry name" value="PHOSPHOPANTETHEINE ADENYLYLTRANSFERASE"/>
    <property type="match status" value="1"/>
</dbReference>
<dbReference type="PANTHER" id="PTHR21342:SF1">
    <property type="entry name" value="PHOSPHOPANTETHEINE ADENYLYLTRANSFERASE"/>
    <property type="match status" value="1"/>
</dbReference>
<dbReference type="Pfam" id="PF01467">
    <property type="entry name" value="CTP_transf_like"/>
    <property type="match status" value="1"/>
</dbReference>
<dbReference type="PRINTS" id="PR01020">
    <property type="entry name" value="LPSBIOSNTHSS"/>
</dbReference>
<dbReference type="SUPFAM" id="SSF52374">
    <property type="entry name" value="Nucleotidylyl transferase"/>
    <property type="match status" value="1"/>
</dbReference>
<reference key="1">
    <citation type="journal article" date="2001" name="J. Bacteriol.">
        <title>Genetic characterization of the Klebsiella pneumoniae waa gene cluster, involved in core lipopolysaccharide biosynthesis.</title>
        <authorList>
            <person name="Regue M."/>
            <person name="Climent N."/>
            <person name="Abitiu N."/>
            <person name="Coderch N."/>
            <person name="Merino S."/>
            <person name="Izquierdo L."/>
            <person name="Altarriba M."/>
            <person name="Tomas J.M."/>
        </authorList>
    </citation>
    <scope>NUCLEOTIDE SEQUENCE [GENOMIC DNA]</scope>
    <source>
        <strain>C3</strain>
    </source>
</reference>
<name>COAD_KLEPN</name>
<proteinExistence type="evidence at protein level"/>
<sequence length="159" mass="17663">MSTKAIYPGTFDPITNGHIDIVTRAASMFDKVVLAIAASPSKKPMFSLDERIALAEQATAHLVNVEVIGFSDLMANFARAQQANILIRGLRAVADFEYEMQLAHMNRHLMPTLESVFLMPCKEWSFISSSLVKEVARHQGDVSHFLPANVHQALLNKLK</sequence>
<accession>Q9XC89</accession>
<protein>
    <recommendedName>
        <fullName evidence="1">Phosphopantetheine adenylyltransferase</fullName>
        <ecNumber evidence="1">2.7.7.3</ecNumber>
    </recommendedName>
    <alternativeName>
        <fullName evidence="1">Dephospho-CoA pyrophosphorylase</fullName>
    </alternativeName>
    <alternativeName>
        <fullName evidence="1">Pantetheine-phosphate adenylyltransferase</fullName>
        <shortName evidence="1">PPAT</shortName>
    </alternativeName>
</protein>
<organism>
    <name type="scientific">Klebsiella pneumoniae</name>
    <dbReference type="NCBI Taxonomy" id="573"/>
    <lineage>
        <taxon>Bacteria</taxon>
        <taxon>Pseudomonadati</taxon>
        <taxon>Pseudomonadota</taxon>
        <taxon>Gammaproteobacteria</taxon>
        <taxon>Enterobacterales</taxon>
        <taxon>Enterobacteriaceae</taxon>
        <taxon>Klebsiella/Raoultella group</taxon>
        <taxon>Klebsiella</taxon>
        <taxon>Klebsiella pneumoniae complex</taxon>
    </lineage>
</organism>
<feature type="chain" id="PRO_0000156220" description="Phosphopantetheine adenylyltransferase">
    <location>
        <begin position="1"/>
        <end position="159"/>
    </location>
</feature>
<feature type="binding site" evidence="1">
    <location>
        <begin position="10"/>
        <end position="11"/>
    </location>
    <ligand>
        <name>ATP</name>
        <dbReference type="ChEBI" id="CHEBI:30616"/>
    </ligand>
</feature>
<feature type="binding site" evidence="1">
    <location>
        <position position="10"/>
    </location>
    <ligand>
        <name>substrate</name>
    </ligand>
</feature>
<feature type="binding site" evidence="1">
    <location>
        <position position="18"/>
    </location>
    <ligand>
        <name>ATP</name>
        <dbReference type="ChEBI" id="CHEBI:30616"/>
    </ligand>
</feature>
<feature type="binding site" evidence="1">
    <location>
        <position position="42"/>
    </location>
    <ligand>
        <name>substrate</name>
    </ligand>
</feature>
<feature type="binding site" evidence="1">
    <location>
        <position position="74"/>
    </location>
    <ligand>
        <name>substrate</name>
    </ligand>
</feature>
<feature type="binding site" evidence="1">
    <location>
        <position position="88"/>
    </location>
    <ligand>
        <name>substrate</name>
    </ligand>
</feature>
<feature type="binding site" evidence="1">
    <location>
        <begin position="89"/>
        <end position="91"/>
    </location>
    <ligand>
        <name>ATP</name>
        <dbReference type="ChEBI" id="CHEBI:30616"/>
    </ligand>
</feature>
<feature type="binding site" evidence="1">
    <location>
        <position position="99"/>
    </location>
    <ligand>
        <name>ATP</name>
        <dbReference type="ChEBI" id="CHEBI:30616"/>
    </ligand>
</feature>
<feature type="binding site" evidence="1">
    <location>
        <begin position="124"/>
        <end position="130"/>
    </location>
    <ligand>
        <name>ATP</name>
        <dbReference type="ChEBI" id="CHEBI:30616"/>
    </ligand>
</feature>
<feature type="site" description="Transition state stabilizer" evidence="1">
    <location>
        <position position="18"/>
    </location>
</feature>
<feature type="strand" evidence="2">
    <location>
        <begin position="4"/>
        <end position="9"/>
    </location>
</feature>
<feature type="helix" evidence="2">
    <location>
        <begin position="16"/>
        <end position="26"/>
    </location>
</feature>
<feature type="strand" evidence="2">
    <location>
        <begin position="29"/>
        <end position="39"/>
    </location>
</feature>
<feature type="helix" evidence="2">
    <location>
        <begin position="48"/>
        <end position="57"/>
    </location>
</feature>
<feature type="turn" evidence="2">
    <location>
        <begin position="58"/>
        <end position="61"/>
    </location>
</feature>
<feature type="strand" evidence="2">
    <location>
        <begin position="65"/>
        <end position="70"/>
    </location>
</feature>
<feature type="helix" evidence="2">
    <location>
        <begin position="74"/>
        <end position="80"/>
    </location>
</feature>
<feature type="strand" evidence="2">
    <location>
        <begin position="85"/>
        <end position="89"/>
    </location>
</feature>
<feature type="helix" evidence="2">
    <location>
        <begin position="96"/>
        <end position="109"/>
    </location>
</feature>
<feature type="strand" evidence="2">
    <location>
        <begin position="114"/>
        <end position="118"/>
    </location>
</feature>
<feature type="helix" evidence="2">
    <location>
        <begin position="122"/>
        <end position="124"/>
    </location>
</feature>
<feature type="helix" evidence="2">
    <location>
        <begin position="129"/>
        <end position="137"/>
    </location>
</feature>
<feature type="helix" evidence="2">
    <location>
        <begin position="143"/>
        <end position="145"/>
    </location>
</feature>
<feature type="helix" evidence="2">
    <location>
        <begin position="148"/>
        <end position="158"/>
    </location>
</feature>
<comment type="function">
    <text evidence="1">Reversibly transfers an adenylyl group from ATP to 4'-phosphopantetheine, yielding dephospho-CoA (dPCoA) and pyrophosphate.</text>
</comment>
<comment type="catalytic activity">
    <reaction evidence="1">
        <text>(R)-4'-phosphopantetheine + ATP + H(+) = 3'-dephospho-CoA + diphosphate</text>
        <dbReference type="Rhea" id="RHEA:19801"/>
        <dbReference type="ChEBI" id="CHEBI:15378"/>
        <dbReference type="ChEBI" id="CHEBI:30616"/>
        <dbReference type="ChEBI" id="CHEBI:33019"/>
        <dbReference type="ChEBI" id="CHEBI:57328"/>
        <dbReference type="ChEBI" id="CHEBI:61723"/>
        <dbReference type="EC" id="2.7.7.3"/>
    </reaction>
</comment>
<comment type="cofactor">
    <cofactor evidence="1">
        <name>Mg(2+)</name>
        <dbReference type="ChEBI" id="CHEBI:18420"/>
    </cofactor>
</comment>
<comment type="pathway">
    <text evidence="1">Cofactor biosynthesis; coenzyme A biosynthesis; CoA from (R)-pantothenate: step 4/5.</text>
</comment>
<comment type="subunit">
    <text evidence="1">Homohexamer.</text>
</comment>
<comment type="subcellular location">
    <subcellularLocation>
        <location evidence="1">Cytoplasm</location>
    </subcellularLocation>
</comment>
<comment type="similarity">
    <text evidence="1">Belongs to the bacterial CoaD family.</text>
</comment>
<evidence type="ECO:0000255" key="1">
    <source>
        <dbReference type="HAMAP-Rule" id="MF_00151"/>
    </source>
</evidence>
<evidence type="ECO:0007829" key="2">
    <source>
        <dbReference type="PDB" id="8I8I"/>
    </source>
</evidence>
<keyword id="KW-0002">3D-structure</keyword>
<keyword id="KW-0067">ATP-binding</keyword>
<keyword id="KW-0173">Coenzyme A biosynthesis</keyword>
<keyword id="KW-0963">Cytoplasm</keyword>
<keyword id="KW-0460">Magnesium</keyword>
<keyword id="KW-0547">Nucleotide-binding</keyword>
<keyword id="KW-0548">Nucleotidyltransferase</keyword>
<keyword id="KW-0808">Transferase</keyword>